<proteinExistence type="evidence at protein level"/>
<protein>
    <recommendedName>
        <fullName>3-carboxy-cis,cis-muconate cycloisomerase</fullName>
        <ecNumber>5.5.1.2</ecNumber>
    </recommendedName>
    <alternativeName>
        <fullName>3-carboxymuconate lactonizing enzyme</fullName>
        <shortName>CMLE</shortName>
    </alternativeName>
</protein>
<comment type="function">
    <text>Catalyzes an anti cycloisomerization.</text>
</comment>
<comment type="catalytic activity">
    <reaction>
        <text>2-(carboxymethyl)-5-oxo-2,5-dihydro-2-furoate = 3-carboxy-cis,cis-muconate + H(+)</text>
        <dbReference type="Rhea" id="RHEA:23656"/>
        <dbReference type="ChEBI" id="CHEBI:15378"/>
        <dbReference type="ChEBI" id="CHEBI:57496"/>
        <dbReference type="ChEBI" id="CHEBI:57979"/>
        <dbReference type="EC" id="5.5.1.2"/>
    </reaction>
</comment>
<comment type="pathway">
    <text>Aromatic compound metabolism; beta-ketoadipate pathway; 5-oxo-4,5-dihydro-2-furylacetate from 3-carboxy-cis,cis-muconate: step 1/2.</text>
</comment>
<comment type="subunit">
    <text evidence="1">Homotetramer.</text>
</comment>
<comment type="similarity">
    <text evidence="2">Belongs to the class-II fumarase/aspartase family.</text>
</comment>
<keyword id="KW-0002">3D-structure</keyword>
<keyword id="KW-0058">Aromatic hydrocarbons catabolism</keyword>
<keyword id="KW-0903">Direct protein sequencing</keyword>
<keyword id="KW-0413">Isomerase</keyword>
<feature type="chain" id="PRO_0000161347" description="3-carboxy-cis,cis-muconate cycloisomerase">
    <location>
        <begin position="1"/>
        <end position="451"/>
    </location>
</feature>
<feature type="sequence conflict" description="In Ref. 1; AAC37149." evidence="2" ref="1">
    <original>A</original>
    <variation>Q</variation>
    <location>
        <position position="37"/>
    </location>
</feature>
<feature type="sequence conflict" description="In Ref. 1; AAC37149." evidence="2" ref="1">
    <original>TVIERAA</original>
    <variation>NCDRTCQQ</variation>
    <location>
        <begin position="50"/>
        <end position="56"/>
    </location>
</feature>
<feature type="helix" evidence="3">
    <location>
        <begin position="6"/>
        <end position="9"/>
    </location>
</feature>
<feature type="helix" evidence="3">
    <location>
        <begin position="12"/>
        <end position="17"/>
    </location>
</feature>
<feature type="helix" evidence="3">
    <location>
        <begin position="20"/>
        <end position="40"/>
    </location>
</feature>
<feature type="helix" evidence="3">
    <location>
        <begin position="46"/>
        <end position="56"/>
    </location>
</feature>
<feature type="helix" evidence="3">
    <location>
        <begin position="59"/>
        <end position="62"/>
    </location>
</feature>
<feature type="helix" evidence="3">
    <location>
        <begin position="65"/>
        <end position="75"/>
    </location>
</feature>
<feature type="strand" evidence="3">
    <location>
        <begin position="76"/>
        <end position="78"/>
    </location>
</feature>
<feature type="helix" evidence="3">
    <location>
        <begin position="79"/>
        <end position="91"/>
    </location>
</feature>
<feature type="helix" evidence="3">
    <location>
        <begin position="97"/>
        <end position="100"/>
    </location>
</feature>
<feature type="turn" evidence="3">
    <location>
        <begin position="101"/>
        <end position="104"/>
    </location>
</feature>
<feature type="helix" evidence="3">
    <location>
        <begin position="107"/>
        <end position="143"/>
    </location>
</feature>
<feature type="turn" evidence="3">
    <location>
        <begin position="144"/>
        <end position="146"/>
    </location>
</feature>
<feature type="strand" evidence="3">
    <location>
        <begin position="148"/>
        <end position="153"/>
    </location>
</feature>
<feature type="strand" evidence="3">
    <location>
        <begin position="156"/>
        <end position="162"/>
    </location>
</feature>
<feature type="helix" evidence="3">
    <location>
        <begin position="163"/>
        <end position="188"/>
    </location>
</feature>
<feature type="helix" evidence="3">
    <location>
        <begin position="201"/>
        <end position="203"/>
    </location>
</feature>
<feature type="helix" evidence="3">
    <location>
        <begin position="207"/>
        <end position="218"/>
    </location>
</feature>
<feature type="helix" evidence="3">
    <location>
        <begin position="232"/>
        <end position="258"/>
    </location>
</feature>
<feature type="turn" evidence="3">
    <location>
        <begin position="261"/>
        <end position="263"/>
    </location>
</feature>
<feature type="helix" evidence="3">
    <location>
        <begin position="287"/>
        <end position="308"/>
    </location>
</feature>
<feature type="helix" evidence="3">
    <location>
        <begin position="320"/>
        <end position="348"/>
    </location>
</feature>
<feature type="helix" evidence="3">
    <location>
        <begin position="353"/>
        <end position="361"/>
    </location>
</feature>
<feature type="turn" evidence="3">
    <location>
        <begin position="362"/>
        <end position="365"/>
    </location>
</feature>
<feature type="helix" evidence="3">
    <location>
        <begin position="366"/>
        <end position="368"/>
    </location>
</feature>
<feature type="helix" evidence="3">
    <location>
        <begin position="369"/>
        <end position="380"/>
    </location>
</feature>
<feature type="helix" evidence="3">
    <location>
        <begin position="382"/>
        <end position="399"/>
    </location>
</feature>
<feature type="helix" evidence="3">
    <location>
        <begin position="403"/>
        <end position="407"/>
    </location>
</feature>
<feature type="helix" evidence="3">
    <location>
        <begin position="411"/>
        <end position="414"/>
    </location>
</feature>
<feature type="helix" evidence="3">
    <location>
        <begin position="419"/>
        <end position="425"/>
    </location>
</feature>
<feature type="helix" evidence="3">
    <location>
        <begin position="428"/>
        <end position="431"/>
    </location>
</feature>
<feature type="helix" evidence="3">
    <location>
        <begin position="435"/>
        <end position="444"/>
    </location>
</feature>
<dbReference type="EC" id="5.5.1.2"/>
<dbReference type="EMBL" id="L05770">
    <property type="protein sequence ID" value="AAC37149.1"/>
    <property type="molecule type" value="Genomic_DNA"/>
</dbReference>
<dbReference type="EMBL" id="CR543861">
    <property type="protein sequence ID" value="CAG68549.1"/>
    <property type="molecule type" value="Genomic_DNA"/>
</dbReference>
<dbReference type="RefSeq" id="WP_004926621.1">
    <property type="nucleotide sequence ID" value="NC_005966.1"/>
</dbReference>
<dbReference type="PDB" id="1Q5N">
    <property type="method" value="X-ray"/>
    <property type="resolution" value="2.30 A"/>
    <property type="chains" value="A=1-451"/>
</dbReference>
<dbReference type="PDBsum" id="1Q5N"/>
<dbReference type="SMR" id="Q59092"/>
<dbReference type="STRING" id="202950.GCA_001485005_03085"/>
<dbReference type="GeneID" id="45234094"/>
<dbReference type="KEGG" id="aci:ACIAD1707"/>
<dbReference type="eggNOG" id="COG0015">
    <property type="taxonomic scope" value="Bacteria"/>
</dbReference>
<dbReference type="HOGENOM" id="CLU_030949_3_3_6"/>
<dbReference type="OrthoDB" id="9768878at2"/>
<dbReference type="BioCyc" id="ASP62977:ACIAD_RS07865-MONOMER"/>
<dbReference type="UniPathway" id="UPA00157">
    <property type="reaction ID" value="UER00265"/>
</dbReference>
<dbReference type="EvolutionaryTrace" id="Q59092"/>
<dbReference type="Proteomes" id="UP000000430">
    <property type="component" value="Chromosome"/>
</dbReference>
<dbReference type="GO" id="GO:0047472">
    <property type="term" value="F:3-carboxy-cis,cis-muconate cycloisomerase activity"/>
    <property type="evidence" value="ECO:0007669"/>
    <property type="project" value="UniProtKB-EC"/>
</dbReference>
<dbReference type="GO" id="GO:0016829">
    <property type="term" value="F:lyase activity"/>
    <property type="evidence" value="ECO:0007669"/>
    <property type="project" value="UniProtKB-ARBA"/>
</dbReference>
<dbReference type="GO" id="GO:0019619">
    <property type="term" value="P:3,4-dihydroxybenzoate catabolic process"/>
    <property type="evidence" value="ECO:0007669"/>
    <property type="project" value="InterPro"/>
</dbReference>
<dbReference type="GO" id="GO:0042952">
    <property type="term" value="P:beta-ketoadipate pathway"/>
    <property type="evidence" value="ECO:0007669"/>
    <property type="project" value="UniProtKB-UniPathway"/>
</dbReference>
<dbReference type="CDD" id="cd01597">
    <property type="entry name" value="pCLME"/>
    <property type="match status" value="1"/>
</dbReference>
<dbReference type="Gene3D" id="1.10.40.30">
    <property type="entry name" value="Fumarase/aspartase (C-terminal domain)"/>
    <property type="match status" value="1"/>
</dbReference>
<dbReference type="Gene3D" id="1.20.200.10">
    <property type="entry name" value="Fumarase/aspartase (Central domain)"/>
    <property type="match status" value="1"/>
</dbReference>
<dbReference type="Gene3D" id="1.10.275.10">
    <property type="entry name" value="Fumarase/aspartase (N-terminal domain)"/>
    <property type="match status" value="1"/>
</dbReference>
<dbReference type="InterPro" id="IPR019468">
    <property type="entry name" value="AdenyloSucc_lyase_C"/>
</dbReference>
<dbReference type="InterPro" id="IPR024083">
    <property type="entry name" value="Fumarase/histidase_N"/>
</dbReference>
<dbReference type="InterPro" id="IPR020557">
    <property type="entry name" value="Fumarate_lyase_CS"/>
</dbReference>
<dbReference type="InterPro" id="IPR000362">
    <property type="entry name" value="Fumarate_lyase_fam"/>
</dbReference>
<dbReference type="InterPro" id="IPR022761">
    <property type="entry name" value="Fumarate_lyase_N"/>
</dbReference>
<dbReference type="InterPro" id="IPR008948">
    <property type="entry name" value="L-Aspartase-like"/>
</dbReference>
<dbReference type="InterPro" id="IPR012789">
    <property type="entry name" value="Protocat_PcaB-like"/>
</dbReference>
<dbReference type="NCBIfam" id="TIGR02426">
    <property type="entry name" value="protocat_pcaB"/>
    <property type="match status" value="1"/>
</dbReference>
<dbReference type="PANTHER" id="PTHR43172">
    <property type="entry name" value="ADENYLOSUCCINATE LYASE"/>
    <property type="match status" value="1"/>
</dbReference>
<dbReference type="PANTHER" id="PTHR43172:SF2">
    <property type="entry name" value="ADENYLOSUCCINATE LYASE C-TERMINAL DOMAIN-CONTAINING PROTEIN"/>
    <property type="match status" value="1"/>
</dbReference>
<dbReference type="Pfam" id="PF10397">
    <property type="entry name" value="ADSL_C"/>
    <property type="match status" value="1"/>
</dbReference>
<dbReference type="Pfam" id="PF00206">
    <property type="entry name" value="Lyase_1"/>
    <property type="match status" value="1"/>
</dbReference>
<dbReference type="PRINTS" id="PR00145">
    <property type="entry name" value="ARGSUCLYASE"/>
</dbReference>
<dbReference type="PRINTS" id="PR00149">
    <property type="entry name" value="FUMRATELYASE"/>
</dbReference>
<dbReference type="SMART" id="SM00998">
    <property type="entry name" value="ADSL_C"/>
    <property type="match status" value="1"/>
</dbReference>
<dbReference type="SUPFAM" id="SSF48557">
    <property type="entry name" value="L-aspartase-like"/>
    <property type="match status" value="1"/>
</dbReference>
<dbReference type="PROSITE" id="PS00163">
    <property type="entry name" value="FUMARATE_LYASES"/>
    <property type="match status" value="1"/>
</dbReference>
<accession>Q59092</accession>
<accession>Q6FBL3</accession>
<name>PCAB_ACIAD</name>
<organism>
    <name type="scientific">Acinetobacter baylyi (strain ATCC 33305 / BD413 / ADP1)</name>
    <dbReference type="NCBI Taxonomy" id="62977"/>
    <lineage>
        <taxon>Bacteria</taxon>
        <taxon>Pseudomonadati</taxon>
        <taxon>Pseudomonadota</taxon>
        <taxon>Gammaproteobacteria</taxon>
        <taxon>Moraxellales</taxon>
        <taxon>Moraxellaceae</taxon>
        <taxon>Acinetobacter</taxon>
    </lineage>
</organism>
<gene>
    <name type="primary">pcaB</name>
    <name type="ordered locus">ACIAD1707</name>
</gene>
<evidence type="ECO:0000250" key="1"/>
<evidence type="ECO:0000305" key="2"/>
<evidence type="ECO:0007829" key="3">
    <source>
        <dbReference type="PDB" id="1Q5N"/>
    </source>
</evidence>
<sequence length="451" mass="49316">MSQLYASLFYQRDVTEIFSDRALVSYMVEAEVALAQAQAQVGVIPQSAATVIERAAKTAIDKIDFDALATATGLAGNIAIPFVKQLTAIVKDADEDAARYVHWGATSQDILDTACILQCRDALAIVQNQVQQCYETALSQAQTYRHQVMMGRTWLQQALPITLGHKLARWASAFKRDLDRINAIKARVLVAQLGGAVGSLASLQDQGSIVVEAYAKQLKLGQTACTWHGERDRIVEIASVLGIITGNVGKMARDWSLMMQTEIAEVFEPTAKGRGGSSTMPHKRNPVAAASVLAAANRVPALMSSIYQSMVQEHERSLGAWHAEWLSLPEIFQLTAGALERTLDVLKGMEVNAENMHQNIECTHGLIMAEAVMMALAPHMGRLNAHHVVEAACKTAVAEQKHLKDIISQVDEVKQYFNPSQLDEIFKPESYLGNIQDQIDAVLQEAKGEAK</sequence>
<reference key="1">
    <citation type="journal article" date="1994" name="Gene">
        <title>Contrasting patterns of evolutionary divergence within the Acinetobacter calcoaceticus pca operon.</title>
        <authorList>
            <person name="Kowalchuk G.A."/>
            <person name="Hartnett G.B."/>
            <person name="Benson A."/>
            <person name="Houghton J.E."/>
            <person name="Ngai K.-L."/>
            <person name="Ornston L.N."/>
        </authorList>
    </citation>
    <scope>NUCLEOTIDE SEQUENCE [GENOMIC DNA]</scope>
    <scope>PROTEIN SEQUENCE OF 1-49</scope>
</reference>
<reference key="2">
    <citation type="journal article" date="2004" name="Nucleic Acids Res.">
        <title>Unique features revealed by the genome sequence of Acinetobacter sp. ADP1, a versatile and naturally transformation competent bacterium.</title>
        <authorList>
            <person name="Barbe V."/>
            <person name="Vallenet D."/>
            <person name="Fonknechten N."/>
            <person name="Kreimeyer A."/>
            <person name="Oztas S."/>
            <person name="Labarre L."/>
            <person name="Cruveiller S."/>
            <person name="Robert C."/>
            <person name="Duprat S."/>
            <person name="Wincker P."/>
            <person name="Ornston L.N."/>
            <person name="Weissenbach J."/>
            <person name="Marliere P."/>
            <person name="Cohen G.N."/>
            <person name="Medigue C."/>
        </authorList>
    </citation>
    <scope>NUCLEOTIDE SEQUENCE [LARGE SCALE GENOMIC DNA]</scope>
    <source>
        <strain>ATCC 33305 / BD413 / ADP1</strain>
    </source>
</reference>